<comment type="function">
    <text evidence="2 3 5">Mitochondrial DNA endonuclease and mRNA maturase involved in intron homing and required for splicing of the cytochrome b (cobA) gene intron, containing its own coding sequence. The protein stimulates the intrinsic ribozyme activity of the intron through binding to and stabilizing specific secondary and tertiary structure elements in the RNA. As an endonuclease it introduces a specific double-strand break at the junction of the two exons the cobA gene and thus mediates the insertion of an intron, containing its own coding sequence (group I intron), into an intronless gene. Recognizes with limited specificity and cleaves the sequence 5'-GAGGAGGTTTCTCTGTA-3'. The proteins RNA and DNA recognition and binding surfaces are independent.</text>
</comment>
<comment type="cofactor">
    <cofactor>
        <name>Mg(2+)</name>
        <dbReference type="ChEBI" id="CHEBI:18420"/>
    </cofactor>
</comment>
<comment type="subunit">
    <text evidence="4">Homodimer.</text>
</comment>
<comment type="subcellular location">
    <subcellularLocation>
        <location>Mitochondrion</location>
    </subcellularLocation>
</comment>
<comment type="PTM">
    <text evidence="1">The mature protein may arise from proteolytic cleavage of an in-frame translation of cobA exon 1 plus intron, containing the I-AniI open reading frame. Cleavage may take place close to Met-213 resulting in an active endonuclease/maturase of about 30 kDa (By similarity).</text>
</comment>
<comment type="miscellaneous">
    <text>Residues 237 to 488 are sufficient for endonuclease, intron homing, and RNA maturase activity.</text>
</comment>
<comment type="similarity">
    <text evidence="6">In the C-terminal section; belongs to the LAGLIDADG endonuclease family.</text>
</comment>
<comment type="sequence caution" evidence="6">
    <conflict type="erroneous gene model prediction">
        <sequence resource="EMBL-CDS" id="AAA31737"/>
    </conflict>
    <text>The cobA ORF was not predicted to be expressed alternatively as a fusion with intron 4, and intron 4 CDS was not annotated.</text>
</comment>
<evidence type="ECO:0000250" key="1"/>
<evidence type="ECO:0000269" key="2">
    <source>
    </source>
</evidence>
<evidence type="ECO:0000269" key="3">
    <source>
    </source>
</evidence>
<evidence type="ECO:0000269" key="4">
    <source>
    </source>
</evidence>
<evidence type="ECO:0000269" key="5">
    <source>
    </source>
</evidence>
<evidence type="ECO:0000305" key="6"/>
<evidence type="ECO:0007829" key="7">
    <source>
        <dbReference type="PDB" id="2QOJ"/>
    </source>
</evidence>
<sequence>MRILKSHPLLKIVNSYIIDSPQPANLSYLWNFGSLLALCLGIQIVTGVTLAMHYTPSVSEAFNSVEHIMRDVNNGWLVRYLHSNTASAFFFLVYLHIGRGLYYGSYKTPRTLTWAIGTVILIVMMATAFLGYVLPYGQMSLWGATVITNLMSAIPWIGQDIVEFIWGGLYTDEPQCGDVLLKILLNAGKSPILGFAYDLFFIIVLLIGVKIAMTRGKSAGVRSLHTSEASQRLHAGDLTYAYLVGLFEGDGYFSITKKGKYLTYELGIELSIKDVQLIYKIKKILGIGIVSFRKINEIEMVALRIRDKNHLKSFILPIFEKYPMFSNKQYDYLRFRNALLSGIISLEDLPDYTRSDEPLNSIESIINTSYFSAWLVGFIEAEGCFSVYKLNKDDDYLIASFDIAQRDGDILISAIRKYLSFTTKVYLDKTNCSKLKVTSVRSVENIIKFLQNAPVKLLGNKKLQYLLWLKQLRKISRYSEKIKIPSNY</sequence>
<gene>
    <name type="primary">I-AniI</name>
</gene>
<reference key="1">
    <citation type="journal article" date="1981" name="Cell">
        <title>The mosaic organization of the apocytochrome b gene of Aspergillus nidulans revealed by DNA sequencing.</title>
        <authorList>
            <person name="Waring R.B."/>
            <person name="Davies R.W."/>
            <person name="Lee S."/>
            <person name="Grisi E."/>
            <person name="Berks M.M."/>
            <person name="Scazzocchio C."/>
        </authorList>
    </citation>
    <scope>NUCLEOTIDE SEQUENCE [GENOMIC DNA]</scope>
    <source>
        <strain>yA2 pyroA4 cnxC3</strain>
    </source>
</reference>
<reference key="2">
    <citation type="journal article" date="1982" name="Proc. Natl. Acad. Sci. U.S.A.">
        <title>Internal structure of a mitochondrial intron of Aspergillus nidulans.</title>
        <authorList>
            <person name="Waring R.B."/>
            <person name="Davies R.W."/>
            <person name="Scazzocchio C."/>
            <person name="Brown T.A."/>
        </authorList>
    </citation>
    <scope>NUCLEOTIDE SEQUENCE [GENOMIC DNA] OF 170-488</scope>
    <source>
        <strain>yA2 pyroA4 cnxC3</strain>
    </source>
</reference>
<reference key="3">
    <citation type="journal article" date="1997" name="Proc. Natl. Acad. Sci. U.S.A.">
        <title>A protein encoded by a group I intron in Aspergillus nidulans directly assists RNA splicing and is a DNA endonuclease.</title>
        <authorList>
            <person name="Ho Y."/>
            <person name="Kim S.-J."/>
            <person name="Waring R.B."/>
        </authorList>
    </citation>
    <scope>FUNCTION</scope>
    <scope>RNA SPLICING AND ENDONUCLEASE ACTIVITY</scope>
</reference>
<reference key="4">
    <citation type="journal article" date="1999" name="J. Mol. Biol.">
        <title>The maturase encoded by a group I intron from Aspergillus nidulans stabilizes RNA tertiary structure and promotes rapid splicing.</title>
        <authorList>
            <person name="Ho Y."/>
            <person name="Waring R.B."/>
        </authorList>
    </citation>
    <scope>FUNCTION</scope>
    <scope>BIOCHEMICAL CHARACTERIZATION OF MATURASE ACTIVITY</scope>
</reference>
<reference key="5">
    <citation type="journal article" date="2003" name="J. Mol. Biol.">
        <title>Functionally distinct nucleic acid binding sites for a group I intron encoded RNA maturase/DNA homing endonuclease.</title>
        <authorList>
            <person name="Chatterjee P."/>
            <person name="Brady K.L."/>
            <person name="Solem A."/>
            <person name="Ho Y."/>
            <person name="Caprara M.G."/>
        </authorList>
    </citation>
    <scope>FUNCTION</scope>
    <scope>RNA AND DNA-BINDING</scope>
</reference>
<reference key="6">
    <citation type="journal article" date="2003" name="Genes Dev.">
        <title>Structural and biochemical analyses of DNA and RNA binding by a bifunctional homing endonuclease and group I intron splicing factor.</title>
        <authorList>
            <person name="Bolduc J.M."/>
            <person name="Spiegel P.C."/>
            <person name="Chatterjee P."/>
            <person name="Brady K.L."/>
            <person name="Downing M.E."/>
            <person name="Caprara M.G."/>
            <person name="Waring R.B."/>
            <person name="Stoddard B.L."/>
        </authorList>
    </citation>
    <scope>X-RAY CRYSTALLOGRAPHY (2.6 ANGSTROMS) OF 237-488 IN COMPLEX WITH DNA</scope>
</reference>
<protein>
    <recommendedName>
        <fullName>Intron-encoded DNA endonuclease I-AniI</fullName>
    </recommendedName>
    <alternativeName>
        <fullName>COB intron protein</fullName>
    </alternativeName>
    <alternativeName>
        <fullName>mRNA maturase bI1</fullName>
    </alternativeName>
    <component>
        <recommendedName>
            <fullName>Truncated non-functional cytochrome b</fullName>
        </recommendedName>
    </component>
    <component>
        <recommendedName>
            <fullName>DNA endonuclease/RNA maturase I-AniI</fullName>
            <ecNumber>3.1.-.-</ecNumber>
        </recommendedName>
    </component>
</protein>
<accession>P03880</accession>
<dbReference type="EC" id="3.1.-.-"/>
<dbReference type="EMBL" id="AH001255">
    <property type="protein sequence ID" value="AAA31737.1"/>
    <property type="status" value="ALT_SEQ"/>
    <property type="molecule type" value="Genomic_DNA"/>
</dbReference>
<dbReference type="EMBL" id="J01387">
    <property type="status" value="NOT_ANNOTATED_CDS"/>
    <property type="molecule type" value="Genomic_DNA"/>
</dbReference>
<dbReference type="PIR" id="A04513">
    <property type="entry name" value="QXASBI"/>
</dbReference>
<dbReference type="PDB" id="1P8K">
    <property type="method" value="X-ray"/>
    <property type="resolution" value="2.60 A"/>
    <property type="chains" value="Z=237-488"/>
</dbReference>
<dbReference type="PDB" id="2QOJ">
    <property type="method" value="X-ray"/>
    <property type="resolution" value="2.40 A"/>
    <property type="chains" value="Z=237-488"/>
</dbReference>
<dbReference type="PDB" id="3EH8">
    <property type="method" value="X-ray"/>
    <property type="resolution" value="2.70 A"/>
    <property type="chains" value="A/D/G=237-488"/>
</dbReference>
<dbReference type="PDBsum" id="1P8K"/>
<dbReference type="PDBsum" id="2QOJ"/>
<dbReference type="PDBsum" id="3EH8"/>
<dbReference type="SMR" id="P03880"/>
<dbReference type="MoonProt" id="P03880"/>
<dbReference type="EvolutionaryTrace" id="P03880"/>
<dbReference type="GO" id="GO:0005739">
    <property type="term" value="C:mitochondrion"/>
    <property type="evidence" value="ECO:0007669"/>
    <property type="project" value="UniProtKB-SubCell"/>
</dbReference>
<dbReference type="GO" id="GO:0004519">
    <property type="term" value="F:endonuclease activity"/>
    <property type="evidence" value="ECO:0007669"/>
    <property type="project" value="UniProtKB-KW"/>
</dbReference>
<dbReference type="GO" id="GO:0006314">
    <property type="term" value="P:intron homing"/>
    <property type="evidence" value="ECO:0007669"/>
    <property type="project" value="UniProtKB-KW"/>
</dbReference>
<dbReference type="GO" id="GO:0006397">
    <property type="term" value="P:mRNA processing"/>
    <property type="evidence" value="ECO:0007669"/>
    <property type="project" value="UniProtKB-KW"/>
</dbReference>
<dbReference type="GO" id="GO:0008380">
    <property type="term" value="P:RNA splicing"/>
    <property type="evidence" value="ECO:0007669"/>
    <property type="project" value="UniProtKB-KW"/>
</dbReference>
<dbReference type="CDD" id="cd00284">
    <property type="entry name" value="Cytochrome_b_N"/>
    <property type="match status" value="1"/>
</dbReference>
<dbReference type="FunFam" id="3.10.28.10:FF:000018">
    <property type="entry name" value="Intron-encoded DNA endonuclease I-AniI"/>
    <property type="match status" value="1"/>
</dbReference>
<dbReference type="FunFam" id="3.10.28.10:FF:000022">
    <property type="entry name" value="Intron-encoded DNA endonuclease I-AniI"/>
    <property type="match status" value="1"/>
</dbReference>
<dbReference type="Gene3D" id="1.20.810.10">
    <property type="entry name" value="Cytochrome Bc1 Complex, Chain C"/>
    <property type="match status" value="1"/>
</dbReference>
<dbReference type="Gene3D" id="3.10.28.10">
    <property type="entry name" value="Homing endonucleases"/>
    <property type="match status" value="2"/>
</dbReference>
<dbReference type="InterPro" id="IPR005797">
    <property type="entry name" value="Cyt_b/b6_N"/>
</dbReference>
<dbReference type="InterPro" id="IPR027387">
    <property type="entry name" value="Cytb/b6-like_sf"/>
</dbReference>
<dbReference type="InterPro" id="IPR048259">
    <property type="entry name" value="Cytochrome_b_N_euk/bac"/>
</dbReference>
<dbReference type="InterPro" id="IPR016174">
    <property type="entry name" value="Di-haem_cyt_TM"/>
</dbReference>
<dbReference type="InterPro" id="IPR027434">
    <property type="entry name" value="Homing_endonucl"/>
</dbReference>
<dbReference type="InterPro" id="IPR004860">
    <property type="entry name" value="LAGLIDADG_dom"/>
</dbReference>
<dbReference type="PANTHER" id="PTHR19271">
    <property type="entry name" value="CYTOCHROME B"/>
    <property type="match status" value="1"/>
</dbReference>
<dbReference type="PANTHER" id="PTHR19271:SF16">
    <property type="entry name" value="CYTOCHROME B"/>
    <property type="match status" value="1"/>
</dbReference>
<dbReference type="Pfam" id="PF00033">
    <property type="entry name" value="Cytochrome_B"/>
    <property type="match status" value="1"/>
</dbReference>
<dbReference type="Pfam" id="PF00961">
    <property type="entry name" value="LAGLIDADG_1"/>
    <property type="match status" value="2"/>
</dbReference>
<dbReference type="SUPFAM" id="SSF55608">
    <property type="entry name" value="Homing endonucleases"/>
    <property type="match status" value="2"/>
</dbReference>
<dbReference type="SUPFAM" id="SSF81342">
    <property type="entry name" value="Transmembrane di-heme cytochromes"/>
    <property type="match status" value="1"/>
</dbReference>
<dbReference type="PROSITE" id="PS51002">
    <property type="entry name" value="CYTB_NTER"/>
    <property type="match status" value="1"/>
</dbReference>
<proteinExistence type="evidence at protein level"/>
<geneLocation type="mitochondrion"/>
<organism>
    <name type="scientific">Emericella nidulans</name>
    <name type="common">Aspergillus nidulans</name>
    <dbReference type="NCBI Taxonomy" id="162425"/>
    <lineage>
        <taxon>Eukaryota</taxon>
        <taxon>Fungi</taxon>
        <taxon>Dikarya</taxon>
        <taxon>Ascomycota</taxon>
        <taxon>Pezizomycotina</taxon>
        <taxon>Eurotiomycetes</taxon>
        <taxon>Eurotiomycetidae</taxon>
        <taxon>Eurotiales</taxon>
        <taxon>Aspergillaceae</taxon>
        <taxon>Aspergillus</taxon>
        <taxon>Aspergillus subgen. Nidulantes</taxon>
    </lineage>
</organism>
<keyword id="KW-0002">3D-structure</keyword>
<keyword id="KW-0255">Endonuclease</keyword>
<keyword id="KW-0378">Hydrolase</keyword>
<keyword id="KW-0404">Intron homing</keyword>
<keyword id="KW-0496">Mitochondrion</keyword>
<keyword id="KW-0507">mRNA processing</keyword>
<keyword id="KW-0508">mRNA splicing</keyword>
<keyword id="KW-0540">Nuclease</keyword>
<feature type="chain" id="PRO_0000013491" description="Truncated non-functional cytochrome b">
    <location>
        <begin position="1"/>
        <end status="unknown"/>
    </location>
</feature>
<feature type="chain" id="PRO_0000013492" description="DNA endonuclease/RNA maturase I-AniI">
    <location>
        <begin status="unknown"/>
        <end position="488"/>
    </location>
</feature>
<feature type="region of interest" description="cobA exon 1 encoded">
    <location>
        <begin position="1"/>
        <end position="169"/>
    </location>
</feature>
<feature type="region of interest" description="cobA intron encoded">
    <location>
        <begin position="170"/>
        <end position="488"/>
    </location>
</feature>
<feature type="sequence conflict" description="In Ref. 6." evidence="6" ref="6">
    <original>I</original>
    <variation>R</variation>
    <location>
        <position position="295"/>
    </location>
</feature>
<feature type="helix" evidence="7">
    <location>
        <begin position="239"/>
        <end position="250"/>
    </location>
</feature>
<feature type="strand" evidence="7">
    <location>
        <begin position="251"/>
        <end position="258"/>
    </location>
</feature>
<feature type="strand" evidence="7">
    <location>
        <begin position="261"/>
        <end position="271"/>
    </location>
</feature>
<feature type="helix" evidence="7">
    <location>
        <begin position="272"/>
        <end position="274"/>
    </location>
</feature>
<feature type="helix" evidence="7">
    <location>
        <begin position="275"/>
        <end position="285"/>
    </location>
</feature>
<feature type="strand" evidence="7">
    <location>
        <begin position="289"/>
        <end position="293"/>
    </location>
</feature>
<feature type="turn" evidence="7">
    <location>
        <begin position="295"/>
        <end position="297"/>
    </location>
</feature>
<feature type="strand" evidence="7">
    <location>
        <begin position="300"/>
        <end position="305"/>
    </location>
</feature>
<feature type="helix" evidence="7">
    <location>
        <begin position="308"/>
        <end position="321"/>
    </location>
</feature>
<feature type="helix" evidence="7">
    <location>
        <begin position="328"/>
        <end position="341"/>
    </location>
</feature>
<feature type="turn" evidence="7">
    <location>
        <begin position="346"/>
        <end position="348"/>
    </location>
</feature>
<feature type="helix" evidence="7">
    <location>
        <begin position="362"/>
        <end position="366"/>
    </location>
</feature>
<feature type="helix" evidence="7">
    <location>
        <begin position="371"/>
        <end position="382"/>
    </location>
</feature>
<feature type="strand" evidence="7">
    <location>
        <begin position="383"/>
        <end position="386"/>
    </location>
</feature>
<feature type="strand" evidence="7">
    <location>
        <begin position="389"/>
        <end position="391"/>
    </location>
</feature>
<feature type="strand" evidence="7">
    <location>
        <begin position="400"/>
        <end position="406"/>
    </location>
</feature>
<feature type="helix" evidence="7">
    <location>
        <begin position="409"/>
        <end position="418"/>
    </location>
</feature>
<feature type="strand" evidence="7">
    <location>
        <begin position="429"/>
        <end position="437"/>
    </location>
</feature>
<feature type="helix" evidence="7">
    <location>
        <begin position="440"/>
        <end position="452"/>
    </location>
</feature>
<feature type="strand" evidence="7">
    <location>
        <begin position="453"/>
        <end position="455"/>
    </location>
</feature>
<feature type="helix" evidence="7">
    <location>
        <begin position="460"/>
        <end position="472"/>
    </location>
</feature>
<feature type="helix" evidence="7">
    <location>
        <begin position="476"/>
        <end position="479"/>
    </location>
</feature>
<name>ANI1_EMEND</name>